<feature type="signal peptide">
    <location>
        <begin position="1"/>
        <end position="31"/>
    </location>
</feature>
<feature type="chain" id="PRO_0000016728" description="BDNF/NT-3 growth factors receptor">
    <location>
        <begin position="32"/>
        <end position="821"/>
    </location>
</feature>
<feature type="topological domain" description="Extracellular" evidence="5">
    <location>
        <begin position="32"/>
        <end position="429"/>
    </location>
</feature>
<feature type="transmembrane region" description="Helical" evidence="5">
    <location>
        <begin position="430"/>
        <end position="453"/>
    </location>
</feature>
<feature type="topological domain" description="Cytoplasmic" evidence="5">
    <location>
        <begin position="454"/>
        <end position="821"/>
    </location>
</feature>
<feature type="domain" description="LRRNT">
    <location>
        <begin position="32"/>
        <end position="61"/>
    </location>
</feature>
<feature type="repeat" description="LRR 1">
    <location>
        <begin position="92"/>
        <end position="113"/>
    </location>
</feature>
<feature type="repeat" description="LRR 2">
    <location>
        <begin position="116"/>
        <end position="137"/>
    </location>
</feature>
<feature type="domain" description="LRRCT">
    <location>
        <begin position="148"/>
        <end position="196"/>
    </location>
</feature>
<feature type="domain" description="Ig-like C2-type 1">
    <location>
        <begin position="197"/>
        <end position="282"/>
    </location>
</feature>
<feature type="domain" description="Ig-like C2-type 2">
    <location>
        <begin position="301"/>
        <end position="365"/>
    </location>
</feature>
<feature type="domain" description="Protein kinase" evidence="7">
    <location>
        <begin position="537"/>
        <end position="806"/>
    </location>
</feature>
<feature type="region of interest" description="Interaction with MAPK8IP3/JIP3" evidence="4">
    <location>
        <begin position="454"/>
        <end position="465"/>
    </location>
</feature>
<feature type="region of interest" description="Disordered" evidence="9">
    <location>
        <begin position="474"/>
        <end position="497"/>
    </location>
</feature>
<feature type="compositionally biased region" description="Polar residues" evidence="9">
    <location>
        <begin position="484"/>
        <end position="494"/>
    </location>
</feature>
<feature type="active site" description="Proton acceptor" evidence="7 8">
    <location>
        <position position="675"/>
    </location>
</feature>
<feature type="binding site" evidence="7">
    <location>
        <begin position="543"/>
        <end position="551"/>
    </location>
    <ligand>
        <name>ATP</name>
        <dbReference type="ChEBI" id="CHEBI:30616"/>
    </ligand>
</feature>
<feature type="binding site" evidence="7">
    <location>
        <position position="571"/>
    </location>
    <ligand>
        <name>ATP</name>
        <dbReference type="ChEBI" id="CHEBI:30616"/>
    </ligand>
</feature>
<feature type="site" description="Interaction with SHC1">
    <location>
        <position position="515"/>
    </location>
</feature>
<feature type="site" description="Interaction with SH2D1A" evidence="1">
    <location>
        <position position="705"/>
    </location>
</feature>
<feature type="site" description="Interaction with PLCG1">
    <location>
        <position position="816"/>
    </location>
</feature>
<feature type="modified residue" description="Phosphotyrosine" evidence="33">
    <location>
        <position position="515"/>
    </location>
</feature>
<feature type="modified residue" description="Phosphotyrosine; by autocatalysis" evidence="4">
    <location>
        <position position="701"/>
    </location>
</feature>
<feature type="modified residue" description="Phosphotyrosine; by autocatalysis" evidence="4">
    <location>
        <position position="705"/>
    </location>
</feature>
<feature type="modified residue" description="Phosphotyrosine; by autocatalysis" evidence="4">
    <location>
        <position position="706"/>
    </location>
</feature>
<feature type="modified residue" description="Phosphotyrosine; by autocatalysis" evidence="4">
    <location>
        <position position="816"/>
    </location>
</feature>
<feature type="glycosylation site" description="N-linked (GlcNAc...) asparagine" evidence="5">
    <location>
        <position position="67"/>
    </location>
</feature>
<feature type="glycosylation site" description="N-linked (GlcNAc...) asparagine" evidence="5">
    <location>
        <position position="95"/>
    </location>
</feature>
<feature type="glycosylation site" description="N-linked (GlcNAc...) asparagine" evidence="5">
    <location>
        <position position="121"/>
    </location>
</feature>
<feature type="glycosylation site" description="N-linked (GlcNAc...) asparagine" evidence="5">
    <location>
        <position position="178"/>
    </location>
</feature>
<feature type="glycosylation site" description="N-linked (GlcNAc...) asparagine" evidence="5">
    <location>
        <position position="205"/>
    </location>
</feature>
<feature type="glycosylation site" description="N-linked (GlcNAc...) asparagine" evidence="5">
    <location>
        <position position="241"/>
    </location>
</feature>
<feature type="glycosylation site" description="N-linked (GlcNAc...) asparagine" evidence="5">
    <location>
        <position position="254"/>
    </location>
</feature>
<feature type="glycosylation site" description="N-linked (GlcNAc...) asparagine" evidence="5">
    <location>
        <position position="280"/>
    </location>
</feature>
<feature type="glycosylation site" description="N-linked (GlcNAc...) asparagine" evidence="5">
    <location>
        <position position="325"/>
    </location>
</feature>
<feature type="glycosylation site" description="N-linked (GlcNAc...) asparagine" evidence="5">
    <location>
        <position position="338"/>
    </location>
</feature>
<feature type="glycosylation site" description="N-linked (GlcNAc...) asparagine" evidence="5">
    <location>
        <position position="350"/>
    </location>
</feature>
<feature type="glycosylation site" description="N-linked (GlcNAc...) asparagine" evidence="5">
    <location>
        <position position="411"/>
    </location>
</feature>
<feature type="disulfide bond" evidence="6">
    <location>
        <begin position="32"/>
        <end position="38"/>
    </location>
</feature>
<feature type="disulfide bond" evidence="6">
    <location>
        <begin position="36"/>
        <end position="45"/>
    </location>
</feature>
<feature type="disulfide bond" evidence="6">
    <location>
        <begin position="152"/>
        <end position="176"/>
    </location>
</feature>
<feature type="disulfide bond" evidence="6">
    <location>
        <begin position="154"/>
        <end position="194"/>
    </location>
</feature>
<feature type="disulfide bond" evidence="6">
    <location>
        <begin position="218"/>
        <end position="266"/>
    </location>
</feature>
<feature type="disulfide bond" evidence="6">
    <location>
        <begin position="302"/>
        <end position="345"/>
    </location>
</feature>
<feature type="splice variant" id="VSP_002905" description="In isoform L10." evidence="31">
    <original>I</original>
    <variation>M</variation>
    <location>
        <position position="71"/>
    </location>
</feature>
<feature type="splice variant" id="VSP_002906" description="In isoform L10." evidence="31">
    <location>
        <begin position="72"/>
        <end position="143"/>
    </location>
</feature>
<feature type="splice variant" id="VSP_002907" description="In isoform L1." evidence="31">
    <location>
        <begin position="72"/>
        <end position="120"/>
    </location>
</feature>
<feature type="splice variant" id="VSP_002908" description="In isoform GP95-TRKB." evidence="26 27 28">
    <original>PASVISNDDDS</original>
    <variation>FVLFHKIPLDG</variation>
    <location>
        <begin position="466"/>
        <end position="476"/>
    </location>
</feature>
<feature type="splice variant" id="VSP_002909" description="In isoform GP95-TRKB." evidence="26 27 28">
    <location>
        <begin position="477"/>
        <end position="821"/>
    </location>
</feature>
<feature type="mutagenesis site" description="Loss of interaction with SHC1." evidence="11">
    <original>Y</original>
    <variation>F</variation>
    <location>
        <position position="515"/>
    </location>
</feature>
<feature type="mutagenesis site" description="Loss of interaction with PLCG1." evidence="11">
    <original>Y</original>
    <variation>F</variation>
    <location>
        <position position="816"/>
    </location>
</feature>
<evidence type="ECO:0000250" key="1"/>
<evidence type="ECO:0000250" key="2">
    <source>
        <dbReference type="UniProtKB" id="P04629"/>
    </source>
</evidence>
<evidence type="ECO:0000250" key="3">
    <source>
        <dbReference type="UniProtKB" id="Q16620"/>
    </source>
</evidence>
<evidence type="ECO:0000250" key="4">
    <source>
        <dbReference type="UniProtKB" id="Q63604"/>
    </source>
</evidence>
<evidence type="ECO:0000255" key="5"/>
<evidence type="ECO:0000255" key="6">
    <source>
        <dbReference type="PROSITE-ProRule" id="PRU00114"/>
    </source>
</evidence>
<evidence type="ECO:0000255" key="7">
    <source>
        <dbReference type="PROSITE-ProRule" id="PRU00159"/>
    </source>
</evidence>
<evidence type="ECO:0000255" key="8">
    <source>
        <dbReference type="PROSITE-ProRule" id="PRU10028"/>
    </source>
</evidence>
<evidence type="ECO:0000256" key="9">
    <source>
        <dbReference type="SAM" id="MobiDB-lite"/>
    </source>
</evidence>
<evidence type="ECO:0000269" key="10">
    <source>
    </source>
</evidence>
<evidence type="ECO:0000269" key="11">
    <source>
    </source>
</evidence>
<evidence type="ECO:0000269" key="12">
    <source>
    </source>
</evidence>
<evidence type="ECO:0000269" key="13">
    <source>
    </source>
</evidence>
<evidence type="ECO:0000269" key="14">
    <source>
    </source>
</evidence>
<evidence type="ECO:0000269" key="15">
    <source>
    </source>
</evidence>
<evidence type="ECO:0000269" key="16">
    <source>
    </source>
</evidence>
<evidence type="ECO:0000269" key="17">
    <source>
    </source>
</evidence>
<evidence type="ECO:0000269" key="18">
    <source>
    </source>
</evidence>
<evidence type="ECO:0000269" key="19">
    <source>
    </source>
</evidence>
<evidence type="ECO:0000269" key="20">
    <source>
    </source>
</evidence>
<evidence type="ECO:0000269" key="21">
    <source>
    </source>
</evidence>
<evidence type="ECO:0000269" key="22">
    <source>
    </source>
</evidence>
<evidence type="ECO:0000269" key="23">
    <source>
    </source>
</evidence>
<evidence type="ECO:0000269" key="24">
    <source>
    </source>
</evidence>
<evidence type="ECO:0000269" key="25">
    <source>
    </source>
</evidence>
<evidence type="ECO:0000303" key="26">
    <source>
    </source>
</evidence>
<evidence type="ECO:0000303" key="27">
    <source>
    </source>
</evidence>
<evidence type="ECO:0000303" key="28">
    <source>
    </source>
</evidence>
<evidence type="ECO:0000303" key="29">
    <source>
    </source>
</evidence>
<evidence type="ECO:0000303" key="30">
    <source>
    </source>
</evidence>
<evidence type="ECO:0000305" key="31"/>
<evidence type="ECO:0000312" key="32">
    <source>
        <dbReference type="MGI" id="MGI:97384"/>
    </source>
</evidence>
<evidence type="ECO:0007744" key="33">
    <source>
    </source>
</evidence>
<comment type="function">
    <text evidence="10 11 13 14 17 18 19 23 24 25">Receptor tyrosine kinase involved in the development and the maturation of the central and the peripheral nervous systems through regulation of neuron survival, proliferation, migration, differentiation, and synapse formation and plasticity. Receptor for BDNF/brain-derived neurotrophic factor and NTF4/neurotrophin-4. Alternatively can also bind NTF3/neurotrophin-3 which is less efficient in activating the receptor but regulates neuron survival through NTRK2. Upon ligand-binding, undergoes homodimerization, autophosphorylation and activation. Recruits, phosphorylates and/or activates several downstream effectors including SHC1, FRS2, SH2B1, SH2B2 and PLCG1 that regulate distinct overlapping signaling cascades. Through SHC1, FRS2, SH2B1, SH2B2 activates the GRB2-Ras-MAPK cascade that regulates for instance neuronal differentiation including neurite outgrowth. Through the same effectors controls the Ras-PI3 kinase-AKT1 signaling cascade that mainly regulates growth and survival. Through PLCG1 and the downstream protein kinase C-regulated pathways controls synaptic plasticity. Thereby, plays a role in learning and memory by regulating both short term synaptic function and long-term potentiation. PLCG1 also leads to NF-Kappa-B activation and the transcription of genes involved in cell survival. Hence, it is able to suppress anoikis, the apoptosis resulting from loss of cell-matrix interactions. Isoform GP95-TRKB may also play a role in neutrophin-dependent calcium signaling in glial cells and mediate communication between neurons and glia.</text>
</comment>
<comment type="catalytic activity">
    <reaction evidence="8 23">
        <text>L-tyrosyl-[protein] + ATP = O-phospho-L-tyrosyl-[protein] + ADP + H(+)</text>
        <dbReference type="Rhea" id="RHEA:10596"/>
        <dbReference type="Rhea" id="RHEA-COMP:10136"/>
        <dbReference type="Rhea" id="RHEA-COMP:20101"/>
        <dbReference type="ChEBI" id="CHEBI:15378"/>
        <dbReference type="ChEBI" id="CHEBI:30616"/>
        <dbReference type="ChEBI" id="CHEBI:46858"/>
        <dbReference type="ChEBI" id="CHEBI:61978"/>
        <dbReference type="ChEBI" id="CHEBI:456216"/>
        <dbReference type="EC" id="2.7.10.1"/>
    </reaction>
</comment>
<comment type="activity regulation">
    <text evidence="4 12 15 16">The formation of active receptors dimers able to fully transduce the ligand-mediated signal, may be negatively regulated by the formation of inactive heterodimers with the non-catalytic isoforms (By similarity). The neuronal activity and the influx of calcium positively regulate the kinase activity and the internalization of the receptor which are both important for active signaling. Regulated by NGFR that may control the internalization of the receptor. NGFR may also stimulate the activation by BDNF compared to NTF3 and NTF4. SH2D1A inhibits the autophosphorylation of the receptor, and alters the recruitment and activation of downstream effectors and signaling cascades.</text>
</comment>
<comment type="subunit">
    <text evidence="2 3 4 20 22 23">Exists in a dynamic equilibrium between monomeric (low affinity) and dimeric (high affinity) structures. Interacts (phosphorylated upon activation by BDNF) with SHC1; mediates SHC1 phosphorylation and activation. Interacts (phosphorylated upon activation by BDNF) with PLCG1 and/or PLCG2; mediates PLCG1 phosphorylation and activation. Interacts with SH2B1 and SH2B2. Interacts with NGFR; may regulate the ligand specificity of the receptor (By similarity). Interacts with SORCS2; this interaction is important for normal targeting to post-synaptic densities in response to high-frequency stimulation (PubMed:27457814). Interacts (phosphorylated upon ligand-binding) with SH2D1A; regulates NTRK2. Interacts with SQSTM1 and KIDINS220 (By similarity). Interacts (phosphorylated upon ligand-binding) with FRS2; activates the MAPK signaling pathway (By similarity). Interacts with APPL1 (PubMed:21849472). Interacts with MAPK8IP3/JIP3 and KLC1; interaction with KLC1 is mediated by MAPK8IP3/JIP3 (By similarity). Interacts with SORL1; this interaction facilitates NTRK2 trafficking between synaptic plasma membranes, postsynaptic densities and cell soma, hence positively regulates BDNF signaling (PubMed:23977241). Interacts with SLITRK2 (By similarity).</text>
</comment>
<comment type="interaction">
    <interactant intactId="EBI-309647">
        <id>P15209</id>
    </interactant>
    <interactant intactId="EBI-300895">
        <id>Q62108</id>
        <label>Dlg4</label>
    </interactant>
    <organismsDiffer>false</organismsDiffer>
    <experiments>4</experiments>
</comment>
<comment type="interaction">
    <interactant intactId="EBI-309647">
        <id>P15209</id>
    </interactant>
    <interactant intactId="EBI-2119135">
        <id>Q99LI8</id>
        <label>Hgs</label>
    </interactant>
    <organismsDiffer>false</organismsDiffer>
    <experiments>2</experiments>
</comment>
<comment type="interaction">
    <interactant intactId="EBI-309647">
        <id>P15209</id>
    </interactant>
    <interactant intactId="EBI-8602514">
        <id>Q8K4V6</id>
        <label>Pirb</label>
    </interactant>
    <organismsDiffer>false</organismsDiffer>
    <experiments>4</experiments>
</comment>
<comment type="interaction">
    <interactant intactId="EBI-309647">
        <id>P15209</id>
    </interactant>
    <interactant intactId="EBI-397236">
        <id>P35235</id>
        <label>Ptpn11</label>
    </interactant>
    <organismsDiffer>false</organismsDiffer>
    <experiments>2</experiments>
</comment>
<comment type="interaction">
    <interactant intactId="EBI-309647">
        <id>P15209</id>
    </interactant>
    <interactant intactId="EBI-6985663">
        <id>Q6PHU5</id>
        <label>Sort1</label>
    </interactant>
    <organismsDiffer>false</organismsDiffer>
    <experiments>3</experiments>
</comment>
<comment type="subcellular location">
    <subcellularLocation>
        <location evidence="12">Cell membrane</location>
        <topology evidence="12">Single-pass type I membrane protein</topology>
    </subcellularLocation>
    <subcellularLocation>
        <location evidence="12">Endosome membrane</location>
        <topology evidence="12">Single-pass type I membrane protein</topology>
    </subcellularLocation>
    <subcellularLocation>
        <location evidence="20">Early endosome membrane</location>
    </subcellularLocation>
    <subcellularLocation>
        <location evidence="4">Cell projection</location>
        <location evidence="4">Axon</location>
    </subcellularLocation>
    <subcellularLocation>
        <location evidence="4">Cell projection</location>
        <location evidence="4">Dendrite</location>
    </subcellularLocation>
    <subcellularLocation>
        <location evidence="4">Cytoplasm</location>
        <location evidence="4">Perinuclear region</location>
    </subcellularLocation>
    <subcellularLocation>
        <location evidence="23">Postsynaptic density</location>
    </subcellularLocation>
    <text evidence="20">Internalized to endosomes upon ligand-binding.</text>
</comment>
<comment type="alternative products">
    <event type="alternative splicing"/>
    <isoform>
        <id>P15209-1</id>
        <name>GP145-TRKB</name>
        <name>L3</name>
        <name>TrkBTK+</name>
        <name>TRKB-FL</name>
        <sequence type="displayed"/>
    </isoform>
    <isoform>
        <id>P15209-2</id>
        <name>GP95-TRKB</name>
        <name>TRKB-T1</name>
        <name>TrkBTK-</name>
        <sequence type="described" ref="VSP_002908 VSP_002909"/>
    </isoform>
    <isoform>
        <id>P15209-3</id>
        <name>L1</name>
        <sequence type="described" ref="VSP_002907"/>
    </isoform>
    <isoform>
        <id>P15209-4</id>
        <name>L10</name>
        <sequence type="described" ref="VSP_002905 VSP_002906"/>
    </isoform>
    <text>Additional isoforms seem to exist.</text>
</comment>
<comment type="tissue specificity">
    <text evidence="22 23">Expressed in the brain, in neurons (at protein level) (PubMed:23977241). Detected in hippocampus (at protein level) (PubMed:27457814). Widely expressed in the central and peripheral nervous system. The different forms are differentially expressed in various cell types. Isoform GP95-TRKB is specifically expressed in glial cells.</text>
</comment>
<comment type="induction">
    <text evidence="21">Expression oscillates in a circadian manner in the liver.</text>
</comment>
<comment type="PTM">
    <text evidence="1 23">Phosphorylated. Undergoes ligand-mediated autophosphorylation that is required for interaction with SHC1 and PLCG1 and other downstream effectors (PubMed:27457814). Some isoforms are not phosphorylated (By similarity).</text>
</comment>
<comment type="PTM">
    <text evidence="15">Ubiquitinated. Undergoes polyubiquitination upon activation; regulated by NGFR. Ubiquitination regulates the internalization of the receptor.</text>
</comment>
<comment type="disruption phenotype">
    <text evidence="24">Mice lacking isoform GP145-TRKB, the catalytic isoform, do not display feeding activity and die at P1. This is associated neuronal deficiencies in the central and the peripheral nervous systems.</text>
</comment>
<comment type="miscellaneous">
    <molecule>Isoform GP95-TRKB</molecule>
    <text evidence="31">Non-catalytic isoform.</text>
</comment>
<comment type="similarity">
    <text evidence="7">Belongs to the protein kinase superfamily. Tyr protein kinase family. Insulin receptor subfamily.</text>
</comment>
<protein>
    <recommendedName>
        <fullName>BDNF/NT-3 growth factors receptor</fullName>
        <ecNumber evidence="23">2.7.10.1</ecNumber>
    </recommendedName>
    <alternativeName>
        <fullName>GP145-TrkB/GP95-TrkB</fullName>
        <shortName>Trk-B</shortName>
    </alternativeName>
    <alternativeName>
        <fullName>Neurotrophic tyrosine kinase receptor type 2</fullName>
    </alternativeName>
    <alternativeName>
        <fullName>TrkB tyrosine kinase</fullName>
    </alternativeName>
</protein>
<dbReference type="EC" id="2.7.10.1" evidence="23"/>
<dbReference type="EMBL" id="M33385">
    <property type="protein sequence ID" value="AAA40482.1"/>
    <property type="molecule type" value="mRNA"/>
</dbReference>
<dbReference type="EMBL" id="X17647">
    <property type="protein sequence ID" value="CAA35636.1"/>
    <property type="molecule type" value="mRNA"/>
</dbReference>
<dbReference type="EMBL" id="AK018789">
    <property type="protein sequence ID" value="BAB31412.1"/>
    <property type="molecule type" value="mRNA"/>
</dbReference>
<dbReference type="EMBL" id="AK147391">
    <property type="protein sequence ID" value="BAE27880.1"/>
    <property type="molecule type" value="mRNA"/>
</dbReference>
<dbReference type="EMBL" id="AK160789">
    <property type="protein sequence ID" value="BAE36012.1"/>
    <property type="molecule type" value="mRNA"/>
</dbReference>
<dbReference type="EMBL" id="BC052014">
    <property type="protein sequence ID" value="AAH52014.2"/>
    <property type="molecule type" value="mRNA"/>
</dbReference>
<dbReference type="CCDS" id="CCDS26573.1">
    <molecule id="P15209-1"/>
</dbReference>
<dbReference type="CCDS" id="CCDS36685.1">
    <molecule id="P15209-2"/>
</dbReference>
<dbReference type="PIR" id="A35104">
    <property type="entry name" value="A35104"/>
</dbReference>
<dbReference type="PIR" id="S06943">
    <property type="entry name" value="S06943"/>
</dbReference>
<dbReference type="RefSeq" id="NP_001020245.1">
    <molecule id="P15209-1"/>
    <property type="nucleotide sequence ID" value="NM_001025074.3"/>
</dbReference>
<dbReference type="RefSeq" id="NP_001269890.1">
    <molecule id="P15209-1"/>
    <property type="nucleotide sequence ID" value="NM_001282961.2"/>
</dbReference>
<dbReference type="RefSeq" id="NP_001413233.1">
    <molecule id="P15209-2"/>
    <property type="nucleotide sequence ID" value="NM_001426304.1"/>
</dbReference>
<dbReference type="RefSeq" id="NP_001413235.1">
    <molecule id="P15209-2"/>
    <property type="nucleotide sequence ID" value="NM_001426306.1"/>
</dbReference>
<dbReference type="RefSeq" id="NP_001413236.1">
    <molecule id="P15209-2"/>
    <property type="nucleotide sequence ID" value="NM_001426307.1"/>
</dbReference>
<dbReference type="RefSeq" id="NP_032771.1">
    <molecule id="P15209-2"/>
    <property type="nucleotide sequence ID" value="NM_008745.4"/>
</dbReference>
<dbReference type="RefSeq" id="XP_006517212.1">
    <molecule id="P15209-1"/>
    <property type="nucleotide sequence ID" value="XM_006517149.5"/>
</dbReference>
<dbReference type="RefSeq" id="XP_006517215.1">
    <property type="nucleotide sequence ID" value="XM_006517152.3"/>
</dbReference>
<dbReference type="RefSeq" id="XP_017170908.1">
    <property type="nucleotide sequence ID" value="XM_017315419.1"/>
</dbReference>
<dbReference type="RefSeq" id="XP_017170909.1">
    <property type="nucleotide sequence ID" value="XM_017315420.1"/>
</dbReference>
<dbReference type="RefSeq" id="XP_030103049.1">
    <molecule id="P15209-2"/>
    <property type="nucleotide sequence ID" value="XM_030247189.2"/>
</dbReference>
<dbReference type="SMR" id="P15209"/>
<dbReference type="BioGRID" id="201869">
    <property type="interactions" value="51"/>
</dbReference>
<dbReference type="CORUM" id="P15209"/>
<dbReference type="DIP" id="DIP-5722N"/>
<dbReference type="FunCoup" id="P15209">
    <property type="interactions" value="1459"/>
</dbReference>
<dbReference type="IntAct" id="P15209">
    <property type="interactions" value="14"/>
</dbReference>
<dbReference type="MINT" id="P15209"/>
<dbReference type="STRING" id="10090.ENSMUSP00000078757"/>
<dbReference type="ChEMBL" id="CHEMBL4523190"/>
<dbReference type="GlyConnect" id="2148">
    <property type="glycosylation" value="26 N-Linked glycans (8 sites)"/>
</dbReference>
<dbReference type="GlyCosmos" id="P15209">
    <property type="glycosylation" value="12 sites, 25 glycans"/>
</dbReference>
<dbReference type="GlyGen" id="P15209">
    <property type="glycosylation" value="14 sites, 30 N-linked glycans (10 sites), 1 O-linked glycan (1 site)"/>
</dbReference>
<dbReference type="iPTMnet" id="P15209"/>
<dbReference type="PhosphoSitePlus" id="P15209"/>
<dbReference type="SwissPalm" id="P15209"/>
<dbReference type="PaxDb" id="10090-ENSMUSP00000078757"/>
<dbReference type="PeptideAtlas" id="P15209"/>
<dbReference type="ProteomicsDB" id="287834">
    <molecule id="P15209-1"/>
</dbReference>
<dbReference type="ProteomicsDB" id="287835">
    <molecule id="P15209-2"/>
</dbReference>
<dbReference type="ProteomicsDB" id="287836">
    <molecule id="P15209-3"/>
</dbReference>
<dbReference type="ProteomicsDB" id="287837">
    <molecule id="P15209-4"/>
</dbReference>
<dbReference type="Antibodypedia" id="2081">
    <property type="antibodies" value="1497 antibodies from 48 providers"/>
</dbReference>
<dbReference type="DNASU" id="18212"/>
<dbReference type="Ensembl" id="ENSMUST00000079828.7">
    <molecule id="P15209-1"/>
    <property type="protein sequence ID" value="ENSMUSP00000078757.6"/>
    <property type="gene ID" value="ENSMUSG00000055254.16"/>
</dbReference>
<dbReference type="Ensembl" id="ENSMUST00000109838.10">
    <molecule id="P15209-2"/>
    <property type="protein sequence ID" value="ENSMUSP00000105464.3"/>
    <property type="gene ID" value="ENSMUSG00000055254.16"/>
</dbReference>
<dbReference type="Ensembl" id="ENSMUST00000224259.2">
    <molecule id="P15209-2"/>
    <property type="protein sequence ID" value="ENSMUSP00000153270.2"/>
    <property type="gene ID" value="ENSMUSG00000055254.16"/>
</dbReference>
<dbReference type="Ensembl" id="ENSMUST00000225488.2">
    <molecule id="P15209-1"/>
    <property type="protein sequence ID" value="ENSMUSP00000153553.2"/>
    <property type="gene ID" value="ENSMUSG00000055254.16"/>
</dbReference>
<dbReference type="GeneID" id="18212"/>
<dbReference type="KEGG" id="mmu:18212"/>
<dbReference type="UCSC" id="uc007qui.2">
    <molecule id="P15209-1"/>
    <property type="organism name" value="mouse"/>
</dbReference>
<dbReference type="AGR" id="MGI:97384"/>
<dbReference type="CTD" id="4915"/>
<dbReference type="MGI" id="MGI:97384">
    <property type="gene designation" value="Ntrk2"/>
</dbReference>
<dbReference type="VEuPathDB" id="HostDB:ENSMUSG00000055254"/>
<dbReference type="eggNOG" id="KOG1026">
    <property type="taxonomic scope" value="Eukaryota"/>
</dbReference>
<dbReference type="GeneTree" id="ENSGT00940000155181"/>
<dbReference type="HOGENOM" id="CLU_030959_1_0_1"/>
<dbReference type="InParanoid" id="P15209"/>
<dbReference type="OMA" id="HIAMQIA"/>
<dbReference type="OrthoDB" id="10005095at2759"/>
<dbReference type="PhylomeDB" id="P15209"/>
<dbReference type="TreeFam" id="TF106465"/>
<dbReference type="BRENDA" id="2.7.10.1">
    <property type="organism ID" value="3474"/>
</dbReference>
<dbReference type="Reactome" id="R-MMU-1257604">
    <property type="pathway name" value="PIP3 activates AKT signaling"/>
</dbReference>
<dbReference type="Reactome" id="R-MMU-6811558">
    <property type="pathway name" value="PI5P, PP2A and IER3 Regulate PI3K/AKT Signaling"/>
</dbReference>
<dbReference type="Reactome" id="R-MMU-9026527">
    <property type="pathway name" value="Activated NTRK2 signals through PLCG1"/>
</dbReference>
<dbReference type="Reactome" id="R-MMU-9028731">
    <property type="pathway name" value="Activated NTRK2 signals through FRS2 and FRS3"/>
</dbReference>
<dbReference type="Reactome" id="R-MMU-9032759">
    <property type="pathway name" value="NTRK2 activates RAC1"/>
</dbReference>
<dbReference type="BioGRID-ORCS" id="18212">
    <property type="hits" value="2 hits in 80 CRISPR screens"/>
</dbReference>
<dbReference type="ChiTaRS" id="Ntrk2">
    <property type="organism name" value="mouse"/>
</dbReference>
<dbReference type="PRO" id="PR:P15209"/>
<dbReference type="Proteomes" id="UP000000589">
    <property type="component" value="Chromosome 13"/>
</dbReference>
<dbReference type="RNAct" id="P15209">
    <property type="molecule type" value="protein"/>
</dbReference>
<dbReference type="Bgee" id="ENSMUSG00000055254">
    <property type="expression patterns" value="Expressed in median eminence of neurohypophysis and 253 other cell types or tissues"/>
</dbReference>
<dbReference type="ExpressionAtlas" id="P15209">
    <property type="expression patterns" value="baseline and differential"/>
</dbReference>
<dbReference type="GO" id="GO:0005829">
    <property type="term" value="C:cytosol"/>
    <property type="evidence" value="ECO:0000314"/>
    <property type="project" value="MGI"/>
</dbReference>
<dbReference type="GO" id="GO:0030425">
    <property type="term" value="C:dendrite"/>
    <property type="evidence" value="ECO:0000250"/>
    <property type="project" value="UniProtKB"/>
</dbReference>
<dbReference type="GO" id="GO:0005769">
    <property type="term" value="C:early endosome"/>
    <property type="evidence" value="ECO:0000314"/>
    <property type="project" value="UniProtKB"/>
</dbReference>
<dbReference type="GO" id="GO:0031901">
    <property type="term" value="C:early endosome membrane"/>
    <property type="evidence" value="ECO:0007669"/>
    <property type="project" value="UniProtKB-SubCell"/>
</dbReference>
<dbReference type="GO" id="GO:0005768">
    <property type="term" value="C:endosome"/>
    <property type="evidence" value="ECO:0000314"/>
    <property type="project" value="MGI"/>
</dbReference>
<dbReference type="GO" id="GO:0031594">
    <property type="term" value="C:neuromuscular junction"/>
    <property type="evidence" value="ECO:0000314"/>
    <property type="project" value="MGI"/>
</dbReference>
<dbReference type="GO" id="GO:0048471">
    <property type="term" value="C:perinuclear region of cytoplasm"/>
    <property type="evidence" value="ECO:0000250"/>
    <property type="project" value="UniProtKB"/>
</dbReference>
<dbReference type="GO" id="GO:0005886">
    <property type="term" value="C:plasma membrane"/>
    <property type="evidence" value="ECO:0000314"/>
    <property type="project" value="MGI"/>
</dbReference>
<dbReference type="GO" id="GO:0014069">
    <property type="term" value="C:postsynaptic density"/>
    <property type="evidence" value="ECO:0000314"/>
    <property type="project" value="ARUK-UCL"/>
</dbReference>
<dbReference type="GO" id="GO:0045211">
    <property type="term" value="C:postsynaptic membrane"/>
    <property type="evidence" value="ECO:0000314"/>
    <property type="project" value="MGI"/>
</dbReference>
<dbReference type="GO" id="GO:0043235">
    <property type="term" value="C:receptor complex"/>
    <property type="evidence" value="ECO:0000266"/>
    <property type="project" value="MGI"/>
</dbReference>
<dbReference type="GO" id="GO:0043195">
    <property type="term" value="C:terminal bouton"/>
    <property type="evidence" value="ECO:0000314"/>
    <property type="project" value="MGI"/>
</dbReference>
<dbReference type="GO" id="GO:0005524">
    <property type="term" value="F:ATP binding"/>
    <property type="evidence" value="ECO:0007669"/>
    <property type="project" value="UniProtKB-KW"/>
</dbReference>
<dbReference type="GO" id="GO:0048403">
    <property type="term" value="F:brain-derived neurotrophic factor binding"/>
    <property type="evidence" value="ECO:0000314"/>
    <property type="project" value="UniProtKB"/>
</dbReference>
<dbReference type="GO" id="GO:0060175">
    <property type="term" value="F:brain-derived neurotrophic factor receptor activity"/>
    <property type="evidence" value="ECO:0000314"/>
    <property type="project" value="UniProtKB"/>
</dbReference>
<dbReference type="GO" id="GO:0043121">
    <property type="term" value="F:neurotrophin binding"/>
    <property type="evidence" value="ECO:0000314"/>
    <property type="project" value="UniProtKB"/>
</dbReference>
<dbReference type="GO" id="GO:0002020">
    <property type="term" value="F:protease binding"/>
    <property type="evidence" value="ECO:0007669"/>
    <property type="project" value="Ensembl"/>
</dbReference>
<dbReference type="GO" id="GO:0042803">
    <property type="term" value="F:protein homodimerization activity"/>
    <property type="evidence" value="ECO:0000250"/>
    <property type="project" value="UniProtKB"/>
</dbReference>
<dbReference type="GO" id="GO:0031547">
    <property type="term" value="P:brain-derived neurotrophic factor receptor signaling pathway"/>
    <property type="evidence" value="ECO:0000314"/>
    <property type="project" value="UniProtKB"/>
</dbReference>
<dbReference type="GO" id="GO:0071230">
    <property type="term" value="P:cellular response to amino acid stimulus"/>
    <property type="evidence" value="ECO:0000314"/>
    <property type="project" value="MGI"/>
</dbReference>
<dbReference type="GO" id="GO:0021954">
    <property type="term" value="P:central nervous system neuron development"/>
    <property type="evidence" value="ECO:0000315"/>
    <property type="project" value="UniProtKB"/>
</dbReference>
<dbReference type="GO" id="GO:0021987">
    <property type="term" value="P:cerebral cortex development"/>
    <property type="evidence" value="ECO:0000315"/>
    <property type="project" value="UniProtKB"/>
</dbReference>
<dbReference type="GO" id="GO:0007623">
    <property type="term" value="P:circadian rhythm"/>
    <property type="evidence" value="ECO:0000270"/>
    <property type="project" value="UniProtKB"/>
</dbReference>
<dbReference type="GO" id="GO:0007631">
    <property type="term" value="P:feeding behavior"/>
    <property type="evidence" value="ECO:0000315"/>
    <property type="project" value="MGI"/>
</dbReference>
<dbReference type="GO" id="GO:0014047">
    <property type="term" value="P:glutamate secretion"/>
    <property type="evidence" value="ECO:0000353"/>
    <property type="project" value="MGI"/>
</dbReference>
<dbReference type="GO" id="GO:0007612">
    <property type="term" value="P:learning"/>
    <property type="evidence" value="ECO:0000315"/>
    <property type="project" value="UniProtKB"/>
</dbReference>
<dbReference type="GO" id="GO:0060291">
    <property type="term" value="P:long-term synaptic potentiation"/>
    <property type="evidence" value="ECO:0000315"/>
    <property type="project" value="UniProtKB"/>
</dbReference>
<dbReference type="GO" id="GO:0042490">
    <property type="term" value="P:mechanoreceptor differentiation"/>
    <property type="evidence" value="ECO:0000315"/>
    <property type="project" value="MGI"/>
</dbReference>
<dbReference type="GO" id="GO:0022011">
    <property type="term" value="P:myelination in peripheral nervous system"/>
    <property type="evidence" value="ECO:0000316"/>
    <property type="project" value="MGI"/>
</dbReference>
<dbReference type="GO" id="GO:1902430">
    <property type="term" value="P:negative regulation of amyloid-beta formation"/>
    <property type="evidence" value="ECO:0007669"/>
    <property type="project" value="Ensembl"/>
</dbReference>
<dbReference type="GO" id="GO:2000811">
    <property type="term" value="P:negative regulation of anoikis"/>
    <property type="evidence" value="ECO:0000314"/>
    <property type="project" value="UniProtKB"/>
</dbReference>
<dbReference type="GO" id="GO:0043524">
    <property type="term" value="P:negative regulation of neuron apoptotic process"/>
    <property type="evidence" value="ECO:0000250"/>
    <property type="project" value="UniProtKB"/>
</dbReference>
<dbReference type="GO" id="GO:0007528">
    <property type="term" value="P:neuromuscular junction development"/>
    <property type="evidence" value="ECO:0000315"/>
    <property type="project" value="MGI"/>
</dbReference>
<dbReference type="GO" id="GO:0030182">
    <property type="term" value="P:neuron differentiation"/>
    <property type="evidence" value="ECO:0000315"/>
    <property type="project" value="UniProtKB"/>
</dbReference>
<dbReference type="GO" id="GO:0001764">
    <property type="term" value="P:neuron migration"/>
    <property type="evidence" value="ECO:0000315"/>
    <property type="project" value="UniProtKB"/>
</dbReference>
<dbReference type="GO" id="GO:0019227">
    <property type="term" value="P:neuronal action potential propagation"/>
    <property type="evidence" value="ECO:0000316"/>
    <property type="project" value="MGI"/>
</dbReference>
<dbReference type="GO" id="GO:0048709">
    <property type="term" value="P:oligodendrocyte differentiation"/>
    <property type="evidence" value="ECO:0000315"/>
    <property type="project" value="UniProtKB"/>
</dbReference>
<dbReference type="GO" id="GO:0048935">
    <property type="term" value="P:peripheral nervous system neuron development"/>
    <property type="evidence" value="ECO:0000315"/>
    <property type="project" value="UniProtKB"/>
</dbReference>
<dbReference type="GO" id="GO:0050772">
    <property type="term" value="P:positive regulation of axonogenesis"/>
    <property type="evidence" value="ECO:0000250"/>
    <property type="project" value="UniProtKB"/>
</dbReference>
<dbReference type="GO" id="GO:0008284">
    <property type="term" value="P:positive regulation of cell population proliferation"/>
    <property type="evidence" value="ECO:0000250"/>
    <property type="project" value="UniProtKB"/>
</dbReference>
<dbReference type="GO" id="GO:0010628">
    <property type="term" value="P:positive regulation of gene expression"/>
    <property type="evidence" value="ECO:0000315"/>
    <property type="project" value="UniProtKB"/>
</dbReference>
<dbReference type="GO" id="GO:0043410">
    <property type="term" value="P:positive regulation of MAPK cascade"/>
    <property type="evidence" value="ECO:0000250"/>
    <property type="project" value="UniProtKB"/>
</dbReference>
<dbReference type="GO" id="GO:0010976">
    <property type="term" value="P:positive regulation of neuron projection development"/>
    <property type="evidence" value="ECO:0000314"/>
    <property type="project" value="UniProtKB"/>
</dbReference>
<dbReference type="GO" id="GO:2000324">
    <property type="term" value="P:positive regulation of nuclear receptor-mediated glucocorticoid signaling pathway"/>
    <property type="evidence" value="ECO:0000266"/>
    <property type="project" value="MGI"/>
</dbReference>
<dbReference type="GO" id="GO:0051897">
    <property type="term" value="P:positive regulation of phosphatidylinositol 3-kinase/protein kinase B signal transduction"/>
    <property type="evidence" value="ECO:0000250"/>
    <property type="project" value="UniProtKB"/>
</dbReference>
<dbReference type="GO" id="GO:0051965">
    <property type="term" value="P:positive regulation of synapse assembly"/>
    <property type="evidence" value="ECO:0000314"/>
    <property type="project" value="MGI"/>
</dbReference>
<dbReference type="GO" id="GO:0046777">
    <property type="term" value="P:protein autophosphorylation"/>
    <property type="evidence" value="ECO:0000250"/>
    <property type="project" value="UniProtKB"/>
</dbReference>
<dbReference type="GO" id="GO:0043087">
    <property type="term" value="P:regulation of GTPase activity"/>
    <property type="evidence" value="ECO:0000314"/>
    <property type="project" value="UniProtKB"/>
</dbReference>
<dbReference type="GO" id="GO:0019222">
    <property type="term" value="P:regulation of metabolic process"/>
    <property type="evidence" value="ECO:0000315"/>
    <property type="project" value="MGI"/>
</dbReference>
<dbReference type="GO" id="GO:0051896">
    <property type="term" value="P:regulation of phosphatidylinositol 3-kinase/protein kinase B signal transduction"/>
    <property type="evidence" value="ECO:0000315"/>
    <property type="project" value="UniProtKB"/>
</dbReference>
<dbReference type="GO" id="GO:0060041">
    <property type="term" value="P:retina development in camera-type eye"/>
    <property type="evidence" value="ECO:0000315"/>
    <property type="project" value="MGI"/>
</dbReference>
<dbReference type="GO" id="GO:0046548">
    <property type="term" value="P:retinal rod cell development"/>
    <property type="evidence" value="ECO:0000315"/>
    <property type="project" value="MGI"/>
</dbReference>
<dbReference type="GO" id="GO:0099183">
    <property type="term" value="P:trans-synaptic signaling by BDNF, modulating synaptic transmission"/>
    <property type="evidence" value="ECO:0000314"/>
    <property type="project" value="SynGO"/>
</dbReference>
<dbReference type="GO" id="GO:0001570">
    <property type="term" value="P:vasculogenesis"/>
    <property type="evidence" value="ECO:0000315"/>
    <property type="project" value="MGI"/>
</dbReference>
<dbReference type="CDD" id="cd05855">
    <property type="entry name" value="IgI_TrkB_d5"/>
    <property type="match status" value="1"/>
</dbReference>
<dbReference type="CDD" id="cd05093">
    <property type="entry name" value="PTKc_TrkB"/>
    <property type="match status" value="1"/>
</dbReference>
<dbReference type="FunFam" id="2.60.40.10:FF:000239">
    <property type="entry name" value="BDNF/NT-3 growth factors receptor"/>
    <property type="match status" value="1"/>
</dbReference>
<dbReference type="FunFam" id="3.80.10.10:FF:000048">
    <property type="entry name" value="BDNF/NT-3 growth factors receptor"/>
    <property type="match status" value="1"/>
</dbReference>
<dbReference type="FunFam" id="1.10.510.10:FF:000034">
    <property type="entry name" value="Tyrosine-protein kinase receptor"/>
    <property type="match status" value="1"/>
</dbReference>
<dbReference type="FunFam" id="2.60.40.10:FF:000486">
    <property type="entry name" value="Tyrosine-protein kinase receptor"/>
    <property type="match status" value="1"/>
</dbReference>
<dbReference type="FunFam" id="3.30.200.20:FF:000033">
    <property type="entry name" value="Tyrosine-protein kinase receptor"/>
    <property type="match status" value="1"/>
</dbReference>
<dbReference type="Gene3D" id="2.60.40.10">
    <property type="entry name" value="Immunoglobulins"/>
    <property type="match status" value="2"/>
</dbReference>
<dbReference type="Gene3D" id="3.30.200.20">
    <property type="entry name" value="Phosphorylase Kinase, domain 1"/>
    <property type="match status" value="1"/>
</dbReference>
<dbReference type="Gene3D" id="3.80.10.10">
    <property type="entry name" value="Ribonuclease Inhibitor"/>
    <property type="match status" value="1"/>
</dbReference>
<dbReference type="Gene3D" id="1.10.510.10">
    <property type="entry name" value="Transferase(Phosphotransferase) domain 1"/>
    <property type="match status" value="1"/>
</dbReference>
<dbReference type="InterPro" id="IPR000483">
    <property type="entry name" value="Cys-rich_flank_reg_C"/>
</dbReference>
<dbReference type="InterPro" id="IPR007110">
    <property type="entry name" value="Ig-like_dom"/>
</dbReference>
<dbReference type="InterPro" id="IPR036179">
    <property type="entry name" value="Ig-like_dom_sf"/>
</dbReference>
<dbReference type="InterPro" id="IPR013783">
    <property type="entry name" value="Ig-like_fold"/>
</dbReference>
<dbReference type="InterPro" id="IPR013098">
    <property type="entry name" value="Ig_I-set"/>
</dbReference>
<dbReference type="InterPro" id="IPR003599">
    <property type="entry name" value="Ig_sub"/>
</dbReference>
<dbReference type="InterPro" id="IPR003598">
    <property type="entry name" value="Ig_sub2"/>
</dbReference>
<dbReference type="InterPro" id="IPR011009">
    <property type="entry name" value="Kinase-like_dom_sf"/>
</dbReference>
<dbReference type="InterPro" id="IPR001611">
    <property type="entry name" value="Leu-rich_rpt"/>
</dbReference>
<dbReference type="InterPro" id="IPR032675">
    <property type="entry name" value="LRR_dom_sf"/>
</dbReference>
<dbReference type="InterPro" id="IPR000372">
    <property type="entry name" value="LRRNT"/>
</dbReference>
<dbReference type="InterPro" id="IPR020777">
    <property type="entry name" value="NTRK"/>
</dbReference>
<dbReference type="InterPro" id="IPR020455">
    <property type="entry name" value="NTRK2"/>
</dbReference>
<dbReference type="InterPro" id="IPR031635">
    <property type="entry name" value="NTRK_LRRCT"/>
</dbReference>
<dbReference type="InterPro" id="IPR000719">
    <property type="entry name" value="Prot_kinase_dom"/>
</dbReference>
<dbReference type="InterPro" id="IPR017441">
    <property type="entry name" value="Protein_kinase_ATP_BS"/>
</dbReference>
<dbReference type="InterPro" id="IPR050122">
    <property type="entry name" value="RTK"/>
</dbReference>
<dbReference type="InterPro" id="IPR001245">
    <property type="entry name" value="Ser-Thr/Tyr_kinase_cat_dom"/>
</dbReference>
<dbReference type="InterPro" id="IPR008266">
    <property type="entry name" value="Tyr_kinase_AS"/>
</dbReference>
<dbReference type="InterPro" id="IPR020635">
    <property type="entry name" value="Tyr_kinase_cat_dom"/>
</dbReference>
<dbReference type="InterPro" id="IPR002011">
    <property type="entry name" value="Tyr_kinase_rcpt_2_CS"/>
</dbReference>
<dbReference type="PANTHER" id="PTHR24416:SF136">
    <property type="entry name" value="BDNF_NT-3 GROWTH FACTORS RECEPTOR"/>
    <property type="match status" value="1"/>
</dbReference>
<dbReference type="PANTHER" id="PTHR24416">
    <property type="entry name" value="TYROSINE-PROTEIN KINASE RECEPTOR"/>
    <property type="match status" value="1"/>
</dbReference>
<dbReference type="Pfam" id="PF07679">
    <property type="entry name" value="I-set"/>
    <property type="match status" value="2"/>
</dbReference>
<dbReference type="Pfam" id="PF13855">
    <property type="entry name" value="LRR_8"/>
    <property type="match status" value="1"/>
</dbReference>
<dbReference type="Pfam" id="PF16920">
    <property type="entry name" value="LRRCT_2"/>
    <property type="match status" value="1"/>
</dbReference>
<dbReference type="Pfam" id="PF07714">
    <property type="entry name" value="PK_Tyr_Ser-Thr"/>
    <property type="match status" value="1"/>
</dbReference>
<dbReference type="PRINTS" id="PR01939">
    <property type="entry name" value="NTKRECEPTOR"/>
</dbReference>
<dbReference type="PRINTS" id="PR01941">
    <property type="entry name" value="NTKRECEPTOR2"/>
</dbReference>
<dbReference type="PRINTS" id="PR00109">
    <property type="entry name" value="TYRKINASE"/>
</dbReference>
<dbReference type="SMART" id="SM00409">
    <property type="entry name" value="IG"/>
    <property type="match status" value="1"/>
</dbReference>
<dbReference type="SMART" id="SM00408">
    <property type="entry name" value="IGc2"/>
    <property type="match status" value="1"/>
</dbReference>
<dbReference type="SMART" id="SM00082">
    <property type="entry name" value="LRRCT"/>
    <property type="match status" value="1"/>
</dbReference>
<dbReference type="SMART" id="SM00013">
    <property type="entry name" value="LRRNT"/>
    <property type="match status" value="1"/>
</dbReference>
<dbReference type="SMART" id="SM00219">
    <property type="entry name" value="TyrKc"/>
    <property type="match status" value="1"/>
</dbReference>
<dbReference type="SUPFAM" id="SSF48726">
    <property type="entry name" value="Immunoglobulin"/>
    <property type="match status" value="2"/>
</dbReference>
<dbReference type="SUPFAM" id="SSF52058">
    <property type="entry name" value="L domain-like"/>
    <property type="match status" value="1"/>
</dbReference>
<dbReference type="SUPFAM" id="SSF56112">
    <property type="entry name" value="Protein kinase-like (PK-like)"/>
    <property type="match status" value="1"/>
</dbReference>
<dbReference type="PROSITE" id="PS50835">
    <property type="entry name" value="IG_LIKE"/>
    <property type="match status" value="1"/>
</dbReference>
<dbReference type="PROSITE" id="PS00107">
    <property type="entry name" value="PROTEIN_KINASE_ATP"/>
    <property type="match status" value="1"/>
</dbReference>
<dbReference type="PROSITE" id="PS50011">
    <property type="entry name" value="PROTEIN_KINASE_DOM"/>
    <property type="match status" value="1"/>
</dbReference>
<dbReference type="PROSITE" id="PS00109">
    <property type="entry name" value="PROTEIN_KINASE_TYR"/>
    <property type="match status" value="1"/>
</dbReference>
<dbReference type="PROSITE" id="PS00239">
    <property type="entry name" value="RECEPTOR_TYR_KIN_II"/>
    <property type="match status" value="1"/>
</dbReference>
<sequence>MSPWLKWHGPAMARLWGLCLLVLGFWRASLACPTSCKCSSARIWCTEPSPGIVAFPRLEPNSVDPENITEILIANQKRLEIINEDDVEAYVGLRNLTIVDSGLKFVAYKAFLKNSNLRHINFTRNKLTSLSRRHFRHLDLSDLILTGNPFTCSCDIMWLKTLQETKSSPDTQDLYCLNESSKNMPLANLQIPNCGLPSARLAAPNLTVEEGKSVTLSCSVGGDPLPTLYWDVGNLVSKHMNETSHTQGSLRITNISSDDSGKQISCVAENLVGEDQDSVNLTVHFAPTITFLESPTSDHHWCIPFTVRGNPKPALQWFYNGAILNESKYICTKIHVTNHTEYHGCLQLDNPTHMNNGDYTLMAKNEYGKDERQISAHFMGRPGVDYETNPNYPEVLYEDWTTPTDIGDTTNKSNEIPSTDVADQSNREHLSVYAVVVIASVVGFCLLVMLLLLKLARHSKFGMKGPASVISNDDDSASPLHHISNGSNTPSSSEGGPDAVIIGMTKIPVIENPQYFGITNSQLKPDTFVQHIKRHNIVLKRELGEGAFGKVFLAECYNLCPEQDKILVAVKTLKDASDNARKDFHREAELLTNLQHEHIVKFYGVCVEGDPLIMVFEYMKHGDLNKFLRAHGPDAVLMAEGNPPTELTQSQMLHIAQQIAAGMVYLASQHFVHRDLATRNCLVGENLLVKIGDFGMSRDVYSTDYYRVGGHTMLPIRWMPPESIMYRKFTTESDVWSLGVVLWEIFTYGKQPWYQLSNNEVIECITQGRVLQRPRTCPQEVYELMLGCWQREPHTRKNIKSIHTLLQNLAKASPVYLDILG</sequence>
<accession>P15209</accession>
<accession>Q3TUF9</accession>
<accession>Q80WU0</accession>
<accession>Q91XJ9</accession>
<name>NTRK2_MOUSE</name>
<reference key="1">
    <citation type="journal article" date="1989" name="EMBO J.">
        <title>trkB, a novel tyrosine protein kinase receptor expressed during mouse neural development.</title>
        <authorList>
            <person name="Klein R."/>
            <person name="Parada L.F."/>
            <person name="Coulier F."/>
            <person name="Barbacid M."/>
        </authorList>
    </citation>
    <scope>NUCLEOTIDE SEQUENCE [MRNA] (ISOFORM GP145-TRKB)</scope>
    <source>
        <tissue>Brain</tissue>
    </source>
</reference>
<reference key="2">
    <citation type="journal article" date="1990" name="Cell">
        <title>The trkB tyrosine protein kinase gene codes for a second neurogenic receptor that lacks the catalytic kinase domain.</title>
        <authorList>
            <person name="Klein R."/>
            <person name="Conway D."/>
            <person name="Parada L.F."/>
            <person name="Barbacid M."/>
        </authorList>
    </citation>
    <scope>NUCLEOTIDE SEQUENCE [MRNA] (ISOFORMS GP145-TRKB AND GP95-TRKB)</scope>
    <source>
        <tissue>Brain</tissue>
    </source>
</reference>
<reference key="3">
    <citation type="journal article" date="2005" name="Science">
        <title>The transcriptional landscape of the mammalian genome.</title>
        <authorList>
            <person name="Carninci P."/>
            <person name="Kasukawa T."/>
            <person name="Katayama S."/>
            <person name="Gough J."/>
            <person name="Frith M.C."/>
            <person name="Maeda N."/>
            <person name="Oyama R."/>
            <person name="Ravasi T."/>
            <person name="Lenhard B."/>
            <person name="Wells C."/>
            <person name="Kodzius R."/>
            <person name="Shimokawa K."/>
            <person name="Bajic V.B."/>
            <person name="Brenner S.E."/>
            <person name="Batalov S."/>
            <person name="Forrest A.R."/>
            <person name="Zavolan M."/>
            <person name="Davis M.J."/>
            <person name="Wilming L.G."/>
            <person name="Aidinis V."/>
            <person name="Allen J.E."/>
            <person name="Ambesi-Impiombato A."/>
            <person name="Apweiler R."/>
            <person name="Aturaliya R.N."/>
            <person name="Bailey T.L."/>
            <person name="Bansal M."/>
            <person name="Baxter L."/>
            <person name="Beisel K.W."/>
            <person name="Bersano T."/>
            <person name="Bono H."/>
            <person name="Chalk A.M."/>
            <person name="Chiu K.P."/>
            <person name="Choudhary V."/>
            <person name="Christoffels A."/>
            <person name="Clutterbuck D.R."/>
            <person name="Crowe M.L."/>
            <person name="Dalla E."/>
            <person name="Dalrymple B.P."/>
            <person name="de Bono B."/>
            <person name="Della Gatta G."/>
            <person name="di Bernardo D."/>
            <person name="Down T."/>
            <person name="Engstrom P."/>
            <person name="Fagiolini M."/>
            <person name="Faulkner G."/>
            <person name="Fletcher C.F."/>
            <person name="Fukushima T."/>
            <person name="Furuno M."/>
            <person name="Futaki S."/>
            <person name="Gariboldi M."/>
            <person name="Georgii-Hemming P."/>
            <person name="Gingeras T.R."/>
            <person name="Gojobori T."/>
            <person name="Green R.E."/>
            <person name="Gustincich S."/>
            <person name="Harbers M."/>
            <person name="Hayashi Y."/>
            <person name="Hensch T.K."/>
            <person name="Hirokawa N."/>
            <person name="Hill D."/>
            <person name="Huminiecki L."/>
            <person name="Iacono M."/>
            <person name="Ikeo K."/>
            <person name="Iwama A."/>
            <person name="Ishikawa T."/>
            <person name="Jakt M."/>
            <person name="Kanapin A."/>
            <person name="Katoh M."/>
            <person name="Kawasawa Y."/>
            <person name="Kelso J."/>
            <person name="Kitamura H."/>
            <person name="Kitano H."/>
            <person name="Kollias G."/>
            <person name="Krishnan S.P."/>
            <person name="Kruger A."/>
            <person name="Kummerfeld S.K."/>
            <person name="Kurochkin I.V."/>
            <person name="Lareau L.F."/>
            <person name="Lazarevic D."/>
            <person name="Lipovich L."/>
            <person name="Liu J."/>
            <person name="Liuni S."/>
            <person name="McWilliam S."/>
            <person name="Madan Babu M."/>
            <person name="Madera M."/>
            <person name="Marchionni L."/>
            <person name="Matsuda H."/>
            <person name="Matsuzawa S."/>
            <person name="Miki H."/>
            <person name="Mignone F."/>
            <person name="Miyake S."/>
            <person name="Morris K."/>
            <person name="Mottagui-Tabar S."/>
            <person name="Mulder N."/>
            <person name="Nakano N."/>
            <person name="Nakauchi H."/>
            <person name="Ng P."/>
            <person name="Nilsson R."/>
            <person name="Nishiguchi S."/>
            <person name="Nishikawa S."/>
            <person name="Nori F."/>
            <person name="Ohara O."/>
            <person name="Okazaki Y."/>
            <person name="Orlando V."/>
            <person name="Pang K.C."/>
            <person name="Pavan W.J."/>
            <person name="Pavesi G."/>
            <person name="Pesole G."/>
            <person name="Petrovsky N."/>
            <person name="Piazza S."/>
            <person name="Reed J."/>
            <person name="Reid J.F."/>
            <person name="Ring B.Z."/>
            <person name="Ringwald M."/>
            <person name="Rost B."/>
            <person name="Ruan Y."/>
            <person name="Salzberg S.L."/>
            <person name="Sandelin A."/>
            <person name="Schneider C."/>
            <person name="Schoenbach C."/>
            <person name="Sekiguchi K."/>
            <person name="Semple C.A."/>
            <person name="Seno S."/>
            <person name="Sessa L."/>
            <person name="Sheng Y."/>
            <person name="Shibata Y."/>
            <person name="Shimada H."/>
            <person name="Shimada K."/>
            <person name="Silva D."/>
            <person name="Sinclair B."/>
            <person name="Sperling S."/>
            <person name="Stupka E."/>
            <person name="Sugiura K."/>
            <person name="Sultana R."/>
            <person name="Takenaka Y."/>
            <person name="Taki K."/>
            <person name="Tammoja K."/>
            <person name="Tan S.L."/>
            <person name="Tang S."/>
            <person name="Taylor M.S."/>
            <person name="Tegner J."/>
            <person name="Teichmann S.A."/>
            <person name="Ueda H.R."/>
            <person name="van Nimwegen E."/>
            <person name="Verardo R."/>
            <person name="Wei C.L."/>
            <person name="Yagi K."/>
            <person name="Yamanishi H."/>
            <person name="Zabarovsky E."/>
            <person name="Zhu S."/>
            <person name="Zimmer A."/>
            <person name="Hide W."/>
            <person name="Bult C."/>
            <person name="Grimmond S.M."/>
            <person name="Teasdale R.D."/>
            <person name="Liu E.T."/>
            <person name="Brusic V."/>
            <person name="Quackenbush J."/>
            <person name="Wahlestedt C."/>
            <person name="Mattick J.S."/>
            <person name="Hume D.A."/>
            <person name="Kai C."/>
            <person name="Sasaki D."/>
            <person name="Tomaru Y."/>
            <person name="Fukuda S."/>
            <person name="Kanamori-Katayama M."/>
            <person name="Suzuki M."/>
            <person name="Aoki J."/>
            <person name="Arakawa T."/>
            <person name="Iida J."/>
            <person name="Imamura K."/>
            <person name="Itoh M."/>
            <person name="Kato T."/>
            <person name="Kawaji H."/>
            <person name="Kawagashira N."/>
            <person name="Kawashima T."/>
            <person name="Kojima M."/>
            <person name="Kondo S."/>
            <person name="Konno H."/>
            <person name="Nakano K."/>
            <person name="Ninomiya N."/>
            <person name="Nishio T."/>
            <person name="Okada M."/>
            <person name="Plessy C."/>
            <person name="Shibata K."/>
            <person name="Shiraki T."/>
            <person name="Suzuki S."/>
            <person name="Tagami M."/>
            <person name="Waki K."/>
            <person name="Watahiki A."/>
            <person name="Okamura-Oho Y."/>
            <person name="Suzuki H."/>
            <person name="Kawai J."/>
            <person name="Hayashizaki Y."/>
        </authorList>
    </citation>
    <scope>NUCLEOTIDE SEQUENCE [LARGE SCALE MRNA] (ISOFORMS GP145-TRKB AND GP95-TRKB)</scope>
    <source>
        <strain>C57BL/6J</strain>
        <strain>NOD</strain>
        <tissue>Thymus</tissue>
    </source>
</reference>
<reference key="4">
    <citation type="journal article" date="2004" name="Genome Res.">
        <title>The status, quality, and expansion of the NIH full-length cDNA project: the Mammalian Gene Collection (MGC).</title>
        <authorList>
            <consortium name="The MGC Project Team"/>
        </authorList>
    </citation>
    <scope>NUCLEOTIDE SEQUENCE [LARGE SCALE MRNA] (ISOFORM GP95-TRKB)</scope>
    <source>
        <strain>C57BL/6J</strain>
        <tissue>Brain</tissue>
    </source>
</reference>
<reference key="5">
    <citation type="journal article" date="1997" name="J. Biol. Chem.">
        <title>TrkB variants with deletions in the leucine-rich motifs of the extracellular domain.</title>
        <authorList>
            <person name="Ninkina N."/>
            <person name="Grashchuck M."/>
            <person name="Buchman V.L."/>
            <person name="Davies A.M."/>
        </authorList>
    </citation>
    <scope>PARTIAL NUCLEOTIDE SEQUENCE (ISOFORMS L1 AND L10)</scope>
    <source>
        <tissue>Trigeminal ganglion</tissue>
    </source>
</reference>
<reference key="6">
    <citation type="journal article" date="1991" name="Cell">
        <title>The neurotrophic factors brain-derived neurotrophic factor and neurotrophin-3 are ligands for the trkB tyrosine kinase receptor.</title>
        <authorList>
            <person name="Soppet D."/>
            <person name="Escandon E."/>
            <person name="Maragos J."/>
            <person name="Middlemas D.S."/>
            <person name="Reid S.W."/>
            <person name="Blair J."/>
            <person name="Burton L.E."/>
            <person name="Stanton B.R."/>
            <person name="Kaplan D.R."/>
            <person name="Hunter T."/>
            <person name="Nicolics K."/>
            <person name="Parada L.F."/>
        </authorList>
    </citation>
    <scope>FUNCTION IN BDNF AND NTF3 SIGNALING</scope>
</reference>
<reference key="7">
    <citation type="journal article" date="1993" name="Cell">
        <title>Targeted disruption of the trkB neurotrophin receptor gene results in nervous system lesions and neonatal death.</title>
        <authorList>
            <person name="Klein R."/>
            <person name="Smeyne R.J."/>
            <person name="Wurst W."/>
            <person name="Long L.K."/>
            <person name="Auerbach B.A."/>
            <person name="Joyner A.L."/>
            <person name="Barbacid M."/>
        </authorList>
    </citation>
    <scope>DISRUPTION PHENOTYPE</scope>
    <scope>FUNCTION</scope>
</reference>
<reference key="8">
    <citation type="journal article" date="1998" name="Neuron">
        <title>Characterization of neurotrophin and Trk receptor functions in developing sensory ganglia: direct NT-3 activation of TrkB neurons in vivo.</title>
        <authorList>
            <person name="Farinas I."/>
            <person name="Wilkinson G.A."/>
            <person name="Backus C."/>
            <person name="Reichardt L.F."/>
            <person name="Patapoutian A."/>
        </authorList>
    </citation>
    <scope>FUNCTION IN NTF3-MEDIATED NEURON SURVIVAL</scope>
</reference>
<reference key="9">
    <citation type="journal article" date="1999" name="Neuron">
        <title>Essential role for TrkB receptors in hippocampus-mediated learning.</title>
        <authorList>
            <person name="Minichiello L."/>
            <person name="Korte M."/>
            <person name="Wolfer D."/>
            <person name="Kuehn R."/>
            <person name="Unsicker K."/>
            <person name="Cestari V."/>
            <person name="Rossi-Arnaud C."/>
            <person name="Lipp H.P."/>
            <person name="Bonhoeffer T."/>
            <person name="Klein R."/>
        </authorList>
    </citation>
    <scope>FUNCTION IN LONG-TERM POTENTIATION AND LEARNING</scope>
</reference>
<reference key="10">
    <citation type="journal article" date="2002" name="Neuron">
        <title>Mechanism of TrkB-mediated hippocampal long-term potentiation.</title>
        <authorList>
            <person name="Minichiello L."/>
            <person name="Calella A.M."/>
            <person name="Medina D.L."/>
            <person name="Bonhoeffer T."/>
            <person name="Klein R."/>
            <person name="Korte M."/>
        </authorList>
    </citation>
    <scope>FUNCTION IN LONG-TERM POTENTIATION AND LEARNING</scope>
    <scope>INTERACTION WITH SHC1 AND PLCG1</scope>
    <scope>MUTAGENESIS OF TYR-515 AND TYR-816</scope>
</reference>
<reference key="11">
    <citation type="journal article" date="2003" name="J. Cell Biol.">
        <title>Regulation of TrkB receptor tyrosine kinase and its internalization by neuronal activity and Ca2+ influx.</title>
        <authorList>
            <person name="Du J."/>
            <person name="Feng L."/>
            <person name="Zaitsev E."/>
            <person name="Je H.S."/>
            <person name="Liu X.W."/>
            <person name="Lu B."/>
        </authorList>
    </citation>
    <scope>SUBCELLULAR LOCATION</scope>
    <scope>ACTIVITY REGULATION</scope>
</reference>
<reference key="12">
    <citation type="journal article" date="2003" name="Nature">
        <title>Truncated TrkB-T1 mediates neurotrophin-evoked calcium signalling in glia cells.</title>
        <authorList>
            <person name="Rose C.R."/>
            <person name="Blum R."/>
            <person name="Pichler B."/>
            <person name="Lepier A."/>
            <person name="Kafitz K.W."/>
            <person name="Konnerth A."/>
        </authorList>
    </citation>
    <scope>FUNCTION IN CALCIUM SIGNALING (ISOFORM GP95-TRKB)</scope>
</reference>
<reference key="13">
    <citation type="journal article" date="2004" name="EMBO J.">
        <title>TrkB regulates neocortex formation through the Shc/PLCgamma-mediated control of neuronal migration.</title>
        <authorList>
            <person name="Medina D.L."/>
            <person name="Sciarretta C."/>
            <person name="Calella A.M."/>
            <person name="Von Bohlen Und Halbach O."/>
            <person name="Unsicker K."/>
            <person name="Minichiello L."/>
        </authorList>
    </citation>
    <scope>FUNCTION IN NEURONAL MIGRATION AND DIFFERENTIATION</scope>
</reference>
<reference key="14">
    <citation type="journal article" date="2004" name="Nature">
        <title>Suppression of anoikis and induction of metastasis by the neurotrophic receptor TrkB.</title>
        <authorList>
            <person name="Douma S."/>
            <person name="Van Laar T."/>
            <person name="Zevenhoven J."/>
            <person name="Meuwissen R."/>
            <person name="Van Garderen E."/>
            <person name="Peeper D.S."/>
        </authorList>
    </citation>
    <scope>FUNCTION AS A SUPPRESSOR OF ANOIKIS</scope>
</reference>
<reference key="15">
    <citation type="journal article" date="2005" name="EMBO Rep.">
        <title>p75 neurotrophin receptor reduces ligand-induced Trk receptor ubiquitination and delays Trk receptor internalization and degradation.</title>
        <authorList>
            <person name="Makkerh J.P."/>
            <person name="Ceni C."/>
            <person name="Auld D.S."/>
            <person name="Vaillancourt F."/>
            <person name="Dorval G."/>
            <person name="Barker P.A."/>
        </authorList>
    </citation>
    <scope>UBIQUITINATION</scope>
    <scope>ACTIVITY REGULATION</scope>
</reference>
<reference key="16">
    <citation type="journal article" date="2005" name="J. Biol. Chem.">
        <title>SLAM-associated protein as a potential negative regulator in Trk signaling.</title>
        <authorList>
            <person name="Lo K.Y."/>
            <person name="Chin W.H."/>
            <person name="Ng Y.P."/>
            <person name="Cheng A.W."/>
            <person name="Cheung Z.H."/>
            <person name="Ip N.Y."/>
        </authorList>
    </citation>
    <scope>ACTIVITY REGULATION</scope>
    <scope>INTERACTION WITH SH2D1A</scope>
</reference>
<reference key="17">
    <citation type="journal article" date="2006" name="Proc. Natl. Acad. Sci. U.S.A.">
        <title>TrkB binds and tyrosine-phosphorylates Tiam1, leading to activation of Rac1 and induction of changes in cellular morphology.</title>
        <authorList>
            <person name="Miyamoto Y."/>
            <person name="Yamauchi J."/>
            <person name="Tanoue A."/>
            <person name="Wu C."/>
            <person name="Mobley W.C."/>
        </authorList>
    </citation>
    <scope>FUNCTION IN PHOSPHORYLATION OF TIAM1</scope>
    <scope>FUNCTION IN CELL DIFFERENTIATION</scope>
    <scope>INTERACTION WITH TIAM1</scope>
</reference>
<reference key="18">
    <citation type="journal article" date="2008" name="J. Proteome Res.">
        <title>Large-scale identification and evolution indexing of tyrosine phosphorylation sites from murine brain.</title>
        <authorList>
            <person name="Ballif B.A."/>
            <person name="Carey G.R."/>
            <person name="Sunyaev S.R."/>
            <person name="Gygi S.P."/>
        </authorList>
    </citation>
    <scope>PHOSPHORYLATION [LARGE SCALE ANALYSIS] AT TYR-515</scope>
    <scope>IDENTIFICATION BY MASS SPECTROMETRY [LARGE SCALE ANALYSIS]</scope>
    <source>
        <tissue>Brain</tissue>
    </source>
</reference>
<reference key="19">
    <citation type="journal article" date="2010" name="Cell">
        <title>A tissue-specific atlas of mouse protein phosphorylation and expression.</title>
        <authorList>
            <person name="Huttlin E.L."/>
            <person name="Jedrychowski M.P."/>
            <person name="Elias J.E."/>
            <person name="Goswami T."/>
            <person name="Rad R."/>
            <person name="Beausoleil S.A."/>
            <person name="Villen J."/>
            <person name="Haas W."/>
            <person name="Sowa M.E."/>
            <person name="Gygi S.P."/>
        </authorList>
    </citation>
    <scope>IDENTIFICATION BY MASS SPECTROMETRY [LARGE SCALE ANALYSIS]</scope>
    <source>
        <tissue>Brain</tissue>
    </source>
</reference>
<reference key="20">
    <citation type="journal article" date="2011" name="Mol. Biol. Cell">
        <title>Retrolinkin cooperates with endophilin A1 to mediate BDNF-TrkB early endocytic trafficking and signaling from early endosomes.</title>
        <authorList>
            <person name="Fu X."/>
            <person name="Yang Y."/>
            <person name="Xu C."/>
            <person name="Niu Y."/>
            <person name="Chen T."/>
            <person name="Zhou Q."/>
            <person name="Liu J.J."/>
        </authorList>
    </citation>
    <scope>INTERACTION WITH APPL1</scope>
    <scope>SUBCELLULAR LOCATION</scope>
</reference>
<reference key="21">
    <citation type="journal article" date="2011" name="J. Neurosci.">
        <title>TrkB (tropomyosin-related kinase B) controls the assembly and maintenance of GABAergic synapses in the cerebellar cortex.</title>
        <authorList>
            <person name="Chen A.I."/>
            <person name="Nguyen C.N."/>
            <person name="Copenhagen D.R."/>
            <person name="Badurek S."/>
            <person name="Minichiello L."/>
            <person name="Ranscht B."/>
            <person name="Reichardt L.F."/>
        </authorList>
    </citation>
    <scope>FUNCTION IN SYNAPSE FORMATION</scope>
</reference>
<reference key="22">
    <citation type="journal article" date="2013" name="J. Neurosci.">
        <title>p75 neurotrophin receptor is a clock gene that regulates oscillatory components of circadian and metabolic networks.</title>
        <authorList>
            <person name="Baeza-Raja B."/>
            <person name="Eckel-Mahan K."/>
            <person name="Zhang L."/>
            <person name="Vagena E."/>
            <person name="Tsigelny I.F."/>
            <person name="Sassone-Corsi P."/>
            <person name="Ptacek L.J."/>
            <person name="Akassoglou K."/>
        </authorList>
    </citation>
    <scope>INDUCTION</scope>
</reference>
<reference key="23">
    <citation type="journal article" date="2013" name="PLoS ONE">
        <title>SORLA-mediated trafficking of TrkB enhances the response of neurons to BDNF.</title>
        <authorList>
            <person name="Rohe M."/>
            <person name="Hartl D."/>
            <person name="Fjorback A.N."/>
            <person name="Klose J."/>
            <person name="Willnow T.E."/>
        </authorList>
    </citation>
    <scope>INTERACTION WITH SORL1</scope>
    <scope>TISSUE SPECIFICITY</scope>
</reference>
<reference key="24">
    <citation type="journal article" date="2016" name="Mol. Psychiatry">
        <title>SorCS2 is required for BDNF-dependent plasticity in the hippocampus.</title>
        <authorList>
            <person name="Glerup S."/>
            <person name="Bolcho U."/>
            <person name="Moelgaard S."/>
            <person name="Boeggild S."/>
            <person name="Vaegter C.B."/>
            <person name="Smith A.H."/>
            <person name="Nieto-Gonzalez J.L."/>
            <person name="Ovesen P.L."/>
            <person name="Pedersen L.F."/>
            <person name="Fjorback A.N."/>
            <person name="Kjolby M."/>
            <person name="Login H."/>
            <person name="Holm M.M."/>
            <person name="Andersen O.M."/>
            <person name="Nyengaard J.R."/>
            <person name="Willnow T.E."/>
            <person name="Jensen K."/>
            <person name="Nykjaer A."/>
        </authorList>
    </citation>
    <scope>FUNCTION</scope>
    <scope>CATALYTIC ACTIVITY</scope>
    <scope>SUBCELLULAR LOCATION</scope>
    <scope>INTERACTION WITH SORCS2</scope>
    <scope>TISSUE SPECIFICITY</scope>
</reference>
<organism>
    <name type="scientific">Mus musculus</name>
    <name type="common">Mouse</name>
    <dbReference type="NCBI Taxonomy" id="10090"/>
    <lineage>
        <taxon>Eukaryota</taxon>
        <taxon>Metazoa</taxon>
        <taxon>Chordata</taxon>
        <taxon>Craniata</taxon>
        <taxon>Vertebrata</taxon>
        <taxon>Euteleostomi</taxon>
        <taxon>Mammalia</taxon>
        <taxon>Eutheria</taxon>
        <taxon>Euarchontoglires</taxon>
        <taxon>Glires</taxon>
        <taxon>Rodentia</taxon>
        <taxon>Myomorpha</taxon>
        <taxon>Muroidea</taxon>
        <taxon>Muridae</taxon>
        <taxon>Murinae</taxon>
        <taxon>Mus</taxon>
        <taxon>Mus</taxon>
    </lineage>
</organism>
<keyword id="KW-0025">Alternative splicing</keyword>
<keyword id="KW-0067">ATP-binding</keyword>
<keyword id="KW-1003">Cell membrane</keyword>
<keyword id="KW-0966">Cell projection</keyword>
<keyword id="KW-0963">Cytoplasm</keyword>
<keyword id="KW-0217">Developmental protein</keyword>
<keyword id="KW-0221">Differentiation</keyword>
<keyword id="KW-1015">Disulfide bond</keyword>
<keyword id="KW-0967">Endosome</keyword>
<keyword id="KW-0325">Glycoprotein</keyword>
<keyword id="KW-0393">Immunoglobulin domain</keyword>
<keyword id="KW-0418">Kinase</keyword>
<keyword id="KW-0433">Leucine-rich repeat</keyword>
<keyword id="KW-0472">Membrane</keyword>
<keyword id="KW-0524">Neurogenesis</keyword>
<keyword id="KW-0547">Nucleotide-binding</keyword>
<keyword id="KW-0597">Phosphoprotein</keyword>
<keyword id="KW-0675">Receptor</keyword>
<keyword id="KW-1185">Reference proteome</keyword>
<keyword id="KW-0677">Repeat</keyword>
<keyword id="KW-0732">Signal</keyword>
<keyword id="KW-0770">Synapse</keyword>
<keyword id="KW-0808">Transferase</keyword>
<keyword id="KW-0812">Transmembrane</keyword>
<keyword id="KW-1133">Transmembrane helix</keyword>
<keyword id="KW-0829">Tyrosine-protein kinase</keyword>
<keyword id="KW-0832">Ubl conjugation</keyword>
<gene>
    <name evidence="32" type="primary">Ntrk2</name>
    <name evidence="29 30" type="synonym">Trkb</name>
</gene>
<proteinExistence type="evidence at protein level"/>